<reference key="1">
    <citation type="journal article" date="2007" name="Mol. Phylogenet. Evol.">
        <title>Phylogenetic and evolutionary implications of complete chloroplast genome sequences of four early-diverging angiosperms: Buxus (Buxaceae), Chloranthus (Chloranthaceae), Dioscorea (Dioscoreaceae), and Illicium (Schisandraceae).</title>
        <authorList>
            <person name="Hansen D.R."/>
            <person name="Dastidar S.G."/>
            <person name="Cai Z."/>
            <person name="Penaflor C."/>
            <person name="Kuehl J.V."/>
            <person name="Boore J.L."/>
            <person name="Jansen R.K."/>
        </authorList>
    </citation>
    <scope>NUCLEOTIDE SEQUENCE [LARGE SCALE GENOMIC DNA]</scope>
</reference>
<feature type="chain" id="PRO_0000358272" description="NAD(P)H-quinone oxidoreductase subunit J, chloroplastic">
    <location>
        <begin position="1"/>
        <end position="158"/>
    </location>
</feature>
<gene>
    <name evidence="1" type="primary">ndhJ</name>
</gene>
<geneLocation type="chloroplast"/>
<organism>
    <name type="scientific">Illicium oligandrum</name>
    <name type="common">Star anise</name>
    <dbReference type="NCBI Taxonomy" id="145286"/>
    <lineage>
        <taxon>Eukaryota</taxon>
        <taxon>Viridiplantae</taxon>
        <taxon>Streptophyta</taxon>
        <taxon>Embryophyta</taxon>
        <taxon>Tracheophyta</taxon>
        <taxon>Spermatophyta</taxon>
        <taxon>Magnoliopsida</taxon>
        <taxon>Austrobaileyales</taxon>
        <taxon>Schisandraceae</taxon>
        <taxon>Illicium</taxon>
    </lineage>
</organism>
<proteinExistence type="inferred from homology"/>
<keyword id="KW-0150">Chloroplast</keyword>
<keyword id="KW-0472">Membrane</keyword>
<keyword id="KW-0520">NAD</keyword>
<keyword id="KW-0521">NADP</keyword>
<keyword id="KW-0934">Plastid</keyword>
<keyword id="KW-0618">Plastoquinone</keyword>
<keyword id="KW-0874">Quinone</keyword>
<keyword id="KW-0793">Thylakoid</keyword>
<keyword id="KW-1278">Translocase</keyword>
<keyword id="KW-0813">Transport</keyword>
<comment type="function">
    <text evidence="1">NDH shuttles electrons from NAD(P)H:plastoquinone, via FMN and iron-sulfur (Fe-S) centers, to quinones in the photosynthetic chain and possibly in a chloroplast respiratory chain. The immediate electron acceptor for the enzyme in this species is believed to be plastoquinone. Couples the redox reaction to proton translocation, and thus conserves the redox energy in a proton gradient.</text>
</comment>
<comment type="catalytic activity">
    <reaction evidence="1">
        <text>a plastoquinone + NADH + (n+1) H(+)(in) = a plastoquinol + NAD(+) + n H(+)(out)</text>
        <dbReference type="Rhea" id="RHEA:42608"/>
        <dbReference type="Rhea" id="RHEA-COMP:9561"/>
        <dbReference type="Rhea" id="RHEA-COMP:9562"/>
        <dbReference type="ChEBI" id="CHEBI:15378"/>
        <dbReference type="ChEBI" id="CHEBI:17757"/>
        <dbReference type="ChEBI" id="CHEBI:57540"/>
        <dbReference type="ChEBI" id="CHEBI:57945"/>
        <dbReference type="ChEBI" id="CHEBI:62192"/>
    </reaction>
</comment>
<comment type="catalytic activity">
    <reaction evidence="1">
        <text>a plastoquinone + NADPH + (n+1) H(+)(in) = a plastoquinol + NADP(+) + n H(+)(out)</text>
        <dbReference type="Rhea" id="RHEA:42612"/>
        <dbReference type="Rhea" id="RHEA-COMP:9561"/>
        <dbReference type="Rhea" id="RHEA-COMP:9562"/>
        <dbReference type="ChEBI" id="CHEBI:15378"/>
        <dbReference type="ChEBI" id="CHEBI:17757"/>
        <dbReference type="ChEBI" id="CHEBI:57783"/>
        <dbReference type="ChEBI" id="CHEBI:58349"/>
        <dbReference type="ChEBI" id="CHEBI:62192"/>
    </reaction>
</comment>
<comment type="subunit">
    <text evidence="1">NDH is composed of at least 16 different subunits, 5 of which are encoded in the nucleus.</text>
</comment>
<comment type="subcellular location">
    <subcellularLocation>
        <location evidence="1">Plastid</location>
        <location evidence="1">Chloroplast thylakoid membrane</location>
        <topology evidence="1">Peripheral membrane protein</topology>
        <orientation evidence="1">Stromal side</orientation>
    </subcellularLocation>
</comment>
<comment type="similarity">
    <text evidence="1">Belongs to the complex I 30 kDa subunit family.</text>
</comment>
<evidence type="ECO:0000255" key="1">
    <source>
        <dbReference type="HAMAP-Rule" id="MF_01357"/>
    </source>
</evidence>
<sequence length="158" mass="18667">MQGRLSAWLVKHELVHRSLGFDYQGIETLQIKPEDWHSIAVISYVYGYNYLRSQCAYDVAPGGLLASVYHLTRIQYGVDQPEEVCIKVFAKRRNPRIPSVFWIWKSADFQERESYDMLGISYDNHPRLKRILMPESWIGWPLRKDYIAPNFYEIQDAH</sequence>
<dbReference type="EC" id="7.1.1.-" evidence="1"/>
<dbReference type="EMBL" id="EF380354">
    <property type="protein sequence ID" value="ABQ52522.1"/>
    <property type="molecule type" value="Genomic_DNA"/>
</dbReference>
<dbReference type="RefSeq" id="YP_001294273.1">
    <property type="nucleotide sequence ID" value="NC_009600.1"/>
</dbReference>
<dbReference type="SMR" id="A6MMU7"/>
<dbReference type="GeneID" id="5236808"/>
<dbReference type="GO" id="GO:0009535">
    <property type="term" value="C:chloroplast thylakoid membrane"/>
    <property type="evidence" value="ECO:0007669"/>
    <property type="project" value="UniProtKB-SubCell"/>
</dbReference>
<dbReference type="GO" id="GO:0008137">
    <property type="term" value="F:NADH dehydrogenase (ubiquinone) activity"/>
    <property type="evidence" value="ECO:0007669"/>
    <property type="project" value="InterPro"/>
</dbReference>
<dbReference type="GO" id="GO:0048038">
    <property type="term" value="F:quinone binding"/>
    <property type="evidence" value="ECO:0007669"/>
    <property type="project" value="UniProtKB-KW"/>
</dbReference>
<dbReference type="GO" id="GO:0019684">
    <property type="term" value="P:photosynthesis, light reaction"/>
    <property type="evidence" value="ECO:0007669"/>
    <property type="project" value="UniProtKB-UniRule"/>
</dbReference>
<dbReference type="FunFam" id="3.30.460.80:FF:000004">
    <property type="entry name" value="NAD(P)H-quinone oxidoreductase subunit J, chloroplastic"/>
    <property type="match status" value="1"/>
</dbReference>
<dbReference type="Gene3D" id="3.30.460.80">
    <property type="entry name" value="NADH:ubiquinone oxidoreductase, 30kDa subunit"/>
    <property type="match status" value="1"/>
</dbReference>
<dbReference type="HAMAP" id="MF_01357">
    <property type="entry name" value="NDH1_NuoC"/>
    <property type="match status" value="1"/>
</dbReference>
<dbReference type="InterPro" id="IPR010218">
    <property type="entry name" value="NADH_DH_suC"/>
</dbReference>
<dbReference type="InterPro" id="IPR037232">
    <property type="entry name" value="NADH_quin_OxRdtase_su_C/D-like"/>
</dbReference>
<dbReference type="InterPro" id="IPR001268">
    <property type="entry name" value="NADH_UbQ_OxRdtase_30kDa_su"/>
</dbReference>
<dbReference type="InterPro" id="IPR020396">
    <property type="entry name" value="NADH_UbQ_OxRdtase_CS"/>
</dbReference>
<dbReference type="NCBIfam" id="NF009141">
    <property type="entry name" value="PRK12494.1"/>
    <property type="match status" value="1"/>
</dbReference>
<dbReference type="PANTHER" id="PTHR10884:SF14">
    <property type="entry name" value="NADH DEHYDROGENASE [UBIQUINONE] IRON-SULFUR PROTEIN 3, MITOCHONDRIAL"/>
    <property type="match status" value="1"/>
</dbReference>
<dbReference type="PANTHER" id="PTHR10884">
    <property type="entry name" value="NADH DEHYDROGENASE UBIQUINONE IRON-SULFUR PROTEIN 3"/>
    <property type="match status" value="1"/>
</dbReference>
<dbReference type="Pfam" id="PF00329">
    <property type="entry name" value="Complex1_30kDa"/>
    <property type="match status" value="1"/>
</dbReference>
<dbReference type="SUPFAM" id="SSF143243">
    <property type="entry name" value="Nqo5-like"/>
    <property type="match status" value="1"/>
</dbReference>
<dbReference type="PROSITE" id="PS00542">
    <property type="entry name" value="COMPLEX1_30K"/>
    <property type="match status" value="1"/>
</dbReference>
<accession>A6MMU7</accession>
<name>NDHJ_ILLOL</name>
<protein>
    <recommendedName>
        <fullName evidence="1">NAD(P)H-quinone oxidoreductase subunit J, chloroplastic</fullName>
        <ecNumber evidence="1">7.1.1.-</ecNumber>
    </recommendedName>
    <alternativeName>
        <fullName>NAD(P)H dehydrogenase subunit J</fullName>
    </alternativeName>
    <alternativeName>
        <fullName evidence="1">NADH-plastoquinone oxidoreductase subunit J</fullName>
    </alternativeName>
</protein>